<accession>Q5JF85</accession>
<organism>
    <name type="scientific">Thermococcus kodakarensis (strain ATCC BAA-918 / JCM 12380 / KOD1)</name>
    <name type="common">Pyrococcus kodakaraensis (strain KOD1)</name>
    <dbReference type="NCBI Taxonomy" id="69014"/>
    <lineage>
        <taxon>Archaea</taxon>
        <taxon>Methanobacteriati</taxon>
        <taxon>Methanobacteriota</taxon>
        <taxon>Thermococci</taxon>
        <taxon>Thermococcales</taxon>
        <taxon>Thermococcaceae</taxon>
        <taxon>Thermococcus</taxon>
    </lineage>
</organism>
<sequence length="117" mass="13191">MQNIPPQVQAMLGQLESYQQQLQLVVQQKQKVQLELTEAKKALDEIESLPDDAVVYKTVGTLIVKTTKDKAVAELKEKIETLEVRLNALERQEKKLNEKLKELTAQIQSALRPPTAG</sequence>
<protein>
    <recommendedName>
        <fullName evidence="1">Prefoldin subunit beta</fullName>
    </recommendedName>
    <alternativeName>
        <fullName evidence="1">GimC subunit beta</fullName>
    </alternativeName>
</protein>
<reference key="1">
    <citation type="journal article" date="2005" name="Genome Res.">
        <title>Complete genome sequence of the hyperthermophilic archaeon Thermococcus kodakaraensis KOD1 and comparison with Pyrococcus genomes.</title>
        <authorList>
            <person name="Fukui T."/>
            <person name="Atomi H."/>
            <person name="Kanai T."/>
            <person name="Matsumi R."/>
            <person name="Fujiwara S."/>
            <person name="Imanaka T."/>
        </authorList>
    </citation>
    <scope>NUCLEOTIDE SEQUENCE [LARGE SCALE GENOMIC DNA]</scope>
    <source>
        <strain>ATCC BAA-918 / JCM 12380 / KOD1</strain>
    </source>
</reference>
<dbReference type="EMBL" id="AP006878">
    <property type="protein sequence ID" value="BAD84832.1"/>
    <property type="molecule type" value="Genomic_DNA"/>
</dbReference>
<dbReference type="RefSeq" id="WP_011249594.1">
    <property type="nucleotide sequence ID" value="NC_006624.1"/>
</dbReference>
<dbReference type="SMR" id="Q5JF85"/>
<dbReference type="FunCoup" id="Q5JF85">
    <property type="interactions" value="1"/>
</dbReference>
<dbReference type="STRING" id="69014.TK0643"/>
<dbReference type="EnsemblBacteria" id="BAD84832">
    <property type="protein sequence ID" value="BAD84832"/>
    <property type="gene ID" value="TK0643"/>
</dbReference>
<dbReference type="GeneID" id="78447157"/>
<dbReference type="KEGG" id="tko:TK0643"/>
<dbReference type="PATRIC" id="fig|69014.16.peg.624"/>
<dbReference type="eggNOG" id="arCOG01342">
    <property type="taxonomic scope" value="Archaea"/>
</dbReference>
<dbReference type="HOGENOM" id="CLU_131909_1_1_2"/>
<dbReference type="InParanoid" id="Q5JF85"/>
<dbReference type="OrthoDB" id="86066at2157"/>
<dbReference type="PhylomeDB" id="Q5JF85"/>
<dbReference type="Proteomes" id="UP000000536">
    <property type="component" value="Chromosome"/>
</dbReference>
<dbReference type="GO" id="GO:0005737">
    <property type="term" value="C:cytoplasm"/>
    <property type="evidence" value="ECO:0000318"/>
    <property type="project" value="GO_Central"/>
</dbReference>
<dbReference type="GO" id="GO:0016272">
    <property type="term" value="C:prefoldin complex"/>
    <property type="evidence" value="ECO:0007669"/>
    <property type="project" value="UniProtKB-UniRule"/>
</dbReference>
<dbReference type="GO" id="GO:0044183">
    <property type="term" value="F:protein folding chaperone"/>
    <property type="evidence" value="ECO:0000318"/>
    <property type="project" value="GO_Central"/>
</dbReference>
<dbReference type="GO" id="GO:0051082">
    <property type="term" value="F:unfolded protein binding"/>
    <property type="evidence" value="ECO:0000318"/>
    <property type="project" value="GO_Central"/>
</dbReference>
<dbReference type="GO" id="GO:0006457">
    <property type="term" value="P:protein folding"/>
    <property type="evidence" value="ECO:0000318"/>
    <property type="project" value="GO_Central"/>
</dbReference>
<dbReference type="CDD" id="cd23162">
    <property type="entry name" value="Prefoldin_beta_GimC"/>
    <property type="match status" value="1"/>
</dbReference>
<dbReference type="Gene3D" id="1.10.287.370">
    <property type="match status" value="1"/>
</dbReference>
<dbReference type="HAMAP" id="MF_00307">
    <property type="entry name" value="PfdB"/>
    <property type="match status" value="1"/>
</dbReference>
<dbReference type="InterPro" id="IPR002777">
    <property type="entry name" value="PFD_beta-like"/>
</dbReference>
<dbReference type="InterPro" id="IPR012713">
    <property type="entry name" value="PfdB"/>
</dbReference>
<dbReference type="InterPro" id="IPR009053">
    <property type="entry name" value="Prefoldin"/>
</dbReference>
<dbReference type="NCBIfam" id="TIGR02338">
    <property type="entry name" value="gimC_beta"/>
    <property type="match status" value="1"/>
</dbReference>
<dbReference type="PANTHER" id="PTHR20903:SF0">
    <property type="entry name" value="PREFOLDIN SUBUNIT 1"/>
    <property type="match status" value="1"/>
</dbReference>
<dbReference type="PANTHER" id="PTHR20903">
    <property type="entry name" value="PREFOLDIN SUBUNIT 1-RELATED"/>
    <property type="match status" value="1"/>
</dbReference>
<dbReference type="Pfam" id="PF01920">
    <property type="entry name" value="Prefoldin_2"/>
    <property type="match status" value="1"/>
</dbReference>
<dbReference type="SUPFAM" id="SSF46579">
    <property type="entry name" value="Prefoldin"/>
    <property type="match status" value="1"/>
</dbReference>
<keyword id="KW-0143">Chaperone</keyword>
<keyword id="KW-0963">Cytoplasm</keyword>
<keyword id="KW-1185">Reference proteome</keyword>
<proteinExistence type="inferred from homology"/>
<feature type="chain" id="PRO_0000124868" description="Prefoldin subunit beta">
    <location>
        <begin position="1"/>
        <end position="117"/>
    </location>
</feature>
<comment type="function">
    <text evidence="1">Molecular chaperone capable of stabilizing a range of proteins. Seems to fulfill an ATP-independent, HSP70-like function in archaeal de novo protein folding.</text>
</comment>
<comment type="subunit">
    <text evidence="1">Heterohexamer of two alpha and four beta subunits.</text>
</comment>
<comment type="subcellular location">
    <subcellularLocation>
        <location evidence="1">Cytoplasm</location>
    </subcellularLocation>
</comment>
<comment type="similarity">
    <text evidence="1">Belongs to the prefoldin subunit beta family.</text>
</comment>
<name>PFDB_THEKO</name>
<evidence type="ECO:0000255" key="1">
    <source>
        <dbReference type="HAMAP-Rule" id="MF_00307"/>
    </source>
</evidence>
<gene>
    <name evidence="1" type="primary">pfdB</name>
    <name type="ordered locus">TK0643</name>
</gene>